<feature type="chain" id="PRO_1000213457" description="Putative pyruvate, phosphate dikinase regulatory protein">
    <location>
        <begin position="1"/>
        <end position="274"/>
    </location>
</feature>
<feature type="binding site" evidence="1">
    <location>
        <begin position="150"/>
        <end position="157"/>
    </location>
    <ligand>
        <name>ADP</name>
        <dbReference type="ChEBI" id="CHEBI:456216"/>
    </ligand>
</feature>
<name>PDRP_RICPU</name>
<protein>
    <recommendedName>
        <fullName evidence="1">Putative pyruvate, phosphate dikinase regulatory protein</fullName>
        <shortName evidence="1">PPDK regulatory protein</shortName>
        <ecNumber evidence="1">2.7.11.32</ecNumber>
        <ecNumber evidence="1">2.7.4.27</ecNumber>
    </recommendedName>
</protein>
<accession>C4K0B5</accession>
<organism>
    <name type="scientific">Rickettsia peacockii (strain Rustic)</name>
    <dbReference type="NCBI Taxonomy" id="562019"/>
    <lineage>
        <taxon>Bacteria</taxon>
        <taxon>Pseudomonadati</taxon>
        <taxon>Pseudomonadota</taxon>
        <taxon>Alphaproteobacteria</taxon>
        <taxon>Rickettsiales</taxon>
        <taxon>Rickettsiaceae</taxon>
        <taxon>Rickettsieae</taxon>
        <taxon>Rickettsia</taxon>
        <taxon>spotted fever group</taxon>
    </lineage>
</organism>
<evidence type="ECO:0000255" key="1">
    <source>
        <dbReference type="HAMAP-Rule" id="MF_00921"/>
    </source>
</evidence>
<reference key="1">
    <citation type="journal article" date="2009" name="PLoS ONE">
        <title>Genome sequence of the endosymbiont Rickettsia peacockii and comparison with virulent Rickettsia rickettsii: identification of virulence factors.</title>
        <authorList>
            <person name="Felsheim R.F."/>
            <person name="Kurtti T.J."/>
            <person name="Munderloh U.G."/>
        </authorList>
    </citation>
    <scope>NUCLEOTIDE SEQUENCE [LARGE SCALE GENOMIC DNA]</scope>
    <source>
        <strain>Rustic</strain>
    </source>
</reference>
<comment type="function">
    <text evidence="1">Bifunctional serine/threonine kinase and phosphorylase involved in the regulation of the pyruvate, phosphate dikinase (PPDK) by catalyzing its phosphorylation/dephosphorylation.</text>
</comment>
<comment type="catalytic activity">
    <reaction evidence="1">
        <text>N(tele)-phospho-L-histidyl/L-threonyl-[pyruvate, phosphate dikinase] + ADP = N(tele)-phospho-L-histidyl/O-phospho-L-threonyl-[pyruvate, phosphate dikinase] + AMP + H(+)</text>
        <dbReference type="Rhea" id="RHEA:43692"/>
        <dbReference type="Rhea" id="RHEA-COMP:10650"/>
        <dbReference type="Rhea" id="RHEA-COMP:10651"/>
        <dbReference type="ChEBI" id="CHEBI:15378"/>
        <dbReference type="ChEBI" id="CHEBI:30013"/>
        <dbReference type="ChEBI" id="CHEBI:61977"/>
        <dbReference type="ChEBI" id="CHEBI:83586"/>
        <dbReference type="ChEBI" id="CHEBI:456215"/>
        <dbReference type="ChEBI" id="CHEBI:456216"/>
        <dbReference type="EC" id="2.7.11.32"/>
    </reaction>
</comment>
<comment type="catalytic activity">
    <reaction evidence="1">
        <text>N(tele)-phospho-L-histidyl/O-phospho-L-threonyl-[pyruvate, phosphate dikinase] + phosphate + H(+) = N(tele)-phospho-L-histidyl/L-threonyl-[pyruvate, phosphate dikinase] + diphosphate</text>
        <dbReference type="Rhea" id="RHEA:43696"/>
        <dbReference type="Rhea" id="RHEA-COMP:10650"/>
        <dbReference type="Rhea" id="RHEA-COMP:10651"/>
        <dbReference type="ChEBI" id="CHEBI:15378"/>
        <dbReference type="ChEBI" id="CHEBI:30013"/>
        <dbReference type="ChEBI" id="CHEBI:33019"/>
        <dbReference type="ChEBI" id="CHEBI:43474"/>
        <dbReference type="ChEBI" id="CHEBI:61977"/>
        <dbReference type="ChEBI" id="CHEBI:83586"/>
        <dbReference type="EC" id="2.7.4.27"/>
    </reaction>
</comment>
<comment type="similarity">
    <text evidence="1">Belongs to the pyruvate, phosphate/water dikinase regulatory protein family. PDRP subfamily.</text>
</comment>
<proteinExistence type="inferred from homology"/>
<keyword id="KW-0418">Kinase</keyword>
<keyword id="KW-0547">Nucleotide-binding</keyword>
<keyword id="KW-0723">Serine/threonine-protein kinase</keyword>
<keyword id="KW-0808">Transferase</keyword>
<sequence length="274" mass="31764">MTKLIIHLVSDSSVQTAKYAANSALAQFTSVKPKLYHWPMIRNLELLNEVLSKIEYKHGIVLYTIADQELRKTLTKFCYELKIPCISVIGKIIKEMSVFSGIEIEKEQNYNNYKFDKTYFDTLNAIDYAIRHDDGQMLNELSEADIILIGPSRTSKTPTSVFLAYNGLKAANIPYVYNCPFPDFIEKDIDQLVVGLVINPNRLIEIREARLNLLQINENKSYTDFNIVQKECLEVRKICDQRNWPVIDVSTRSIEETAALIMRIYYNRKNKYNK</sequence>
<dbReference type="EC" id="2.7.11.32" evidence="1"/>
<dbReference type="EC" id="2.7.4.27" evidence="1"/>
<dbReference type="EMBL" id="CP001227">
    <property type="protein sequence ID" value="ACR47018.1"/>
    <property type="molecule type" value="Genomic_DNA"/>
</dbReference>
<dbReference type="RefSeq" id="WP_012736332.1">
    <property type="nucleotide sequence ID" value="NC_012730.1"/>
</dbReference>
<dbReference type="SMR" id="C4K0B5"/>
<dbReference type="KEGG" id="rpk:RPR_00005"/>
<dbReference type="HOGENOM" id="CLU_046206_2_1_5"/>
<dbReference type="Proteomes" id="UP000005015">
    <property type="component" value="Chromosome"/>
</dbReference>
<dbReference type="GO" id="GO:0043531">
    <property type="term" value="F:ADP binding"/>
    <property type="evidence" value="ECO:0007669"/>
    <property type="project" value="UniProtKB-UniRule"/>
</dbReference>
<dbReference type="GO" id="GO:0005524">
    <property type="term" value="F:ATP binding"/>
    <property type="evidence" value="ECO:0007669"/>
    <property type="project" value="InterPro"/>
</dbReference>
<dbReference type="GO" id="GO:0016776">
    <property type="term" value="F:phosphotransferase activity, phosphate group as acceptor"/>
    <property type="evidence" value="ECO:0007669"/>
    <property type="project" value="UniProtKB-UniRule"/>
</dbReference>
<dbReference type="GO" id="GO:0004674">
    <property type="term" value="F:protein serine/threonine kinase activity"/>
    <property type="evidence" value="ECO:0007669"/>
    <property type="project" value="UniProtKB-UniRule"/>
</dbReference>
<dbReference type="HAMAP" id="MF_00921">
    <property type="entry name" value="PDRP"/>
    <property type="match status" value="1"/>
</dbReference>
<dbReference type="InterPro" id="IPR005177">
    <property type="entry name" value="Kinase-pyrophosphorylase"/>
</dbReference>
<dbReference type="InterPro" id="IPR026565">
    <property type="entry name" value="PPDK_reg"/>
</dbReference>
<dbReference type="NCBIfam" id="NF003742">
    <property type="entry name" value="PRK05339.1"/>
    <property type="match status" value="1"/>
</dbReference>
<dbReference type="PANTHER" id="PTHR31756">
    <property type="entry name" value="PYRUVATE, PHOSPHATE DIKINASE REGULATORY PROTEIN 1, CHLOROPLASTIC"/>
    <property type="match status" value="1"/>
</dbReference>
<dbReference type="PANTHER" id="PTHR31756:SF3">
    <property type="entry name" value="PYRUVATE, PHOSPHATE DIKINASE REGULATORY PROTEIN 1, CHLOROPLASTIC"/>
    <property type="match status" value="1"/>
</dbReference>
<dbReference type="Pfam" id="PF03618">
    <property type="entry name" value="Kinase-PPPase"/>
    <property type="match status" value="1"/>
</dbReference>
<gene>
    <name type="ordered locus">RPR_00005</name>
</gene>